<keyword id="KW-0963">Cytoplasm</keyword>
<keyword id="KW-0413">Isomerase</keyword>
<dbReference type="EC" id="5.3.1.32" evidence="1"/>
<dbReference type="EMBL" id="CP000668">
    <property type="protein sequence ID" value="ABP41582.1"/>
    <property type="molecule type" value="Genomic_DNA"/>
</dbReference>
<dbReference type="RefSeq" id="WP_002209186.1">
    <property type="nucleotide sequence ID" value="NZ_CP009715.1"/>
</dbReference>
<dbReference type="SMR" id="A4TQM0"/>
<dbReference type="GeneID" id="96664050"/>
<dbReference type="KEGG" id="ypp:YPDSF_3224"/>
<dbReference type="PATRIC" id="fig|386656.14.peg.1120"/>
<dbReference type="GO" id="GO:0005829">
    <property type="term" value="C:cytosol"/>
    <property type="evidence" value="ECO:0007669"/>
    <property type="project" value="TreeGrafter"/>
</dbReference>
<dbReference type="GO" id="GO:0002952">
    <property type="term" value="F:(4S)-4-hydroxy-5-phosphonooxypentane-2,3-dione isomerase activity"/>
    <property type="evidence" value="ECO:0007669"/>
    <property type="project" value="UniProtKB-EC"/>
</dbReference>
<dbReference type="GO" id="GO:0016491">
    <property type="term" value="F:oxidoreductase activity"/>
    <property type="evidence" value="ECO:0007669"/>
    <property type="project" value="TreeGrafter"/>
</dbReference>
<dbReference type="FunFam" id="3.30.70.100:FF:000016">
    <property type="entry name" value="(4S)-4-hydroxy-5-phosphonooxypentane-2,3-dione isomerase"/>
    <property type="match status" value="1"/>
</dbReference>
<dbReference type="Gene3D" id="3.30.70.100">
    <property type="match status" value="1"/>
</dbReference>
<dbReference type="HAMAP" id="MF_02051">
    <property type="entry name" value="LsrG"/>
    <property type="match status" value="1"/>
</dbReference>
<dbReference type="InterPro" id="IPR007138">
    <property type="entry name" value="ABM_dom"/>
</dbReference>
<dbReference type="InterPro" id="IPR050744">
    <property type="entry name" value="AI-2_Isomerase_LsrG"/>
</dbReference>
<dbReference type="InterPro" id="IPR011008">
    <property type="entry name" value="Dimeric_a/b-barrel"/>
</dbReference>
<dbReference type="InterPro" id="IPR033672">
    <property type="entry name" value="LsrG"/>
</dbReference>
<dbReference type="NCBIfam" id="NF007791">
    <property type="entry name" value="PRK10486.1"/>
    <property type="match status" value="1"/>
</dbReference>
<dbReference type="PANTHER" id="PTHR33336:SF1">
    <property type="entry name" value="(4S)-4-HYDROXY-5-PHOSPHONOOXYPENTANE-2,3-DIONE ISOMERASE"/>
    <property type="match status" value="1"/>
</dbReference>
<dbReference type="PANTHER" id="PTHR33336">
    <property type="entry name" value="QUINOL MONOOXYGENASE YGIN-RELATED"/>
    <property type="match status" value="1"/>
</dbReference>
<dbReference type="Pfam" id="PF03992">
    <property type="entry name" value="ABM"/>
    <property type="match status" value="1"/>
</dbReference>
<dbReference type="SUPFAM" id="SSF54909">
    <property type="entry name" value="Dimeric alpha+beta barrel"/>
    <property type="match status" value="1"/>
</dbReference>
<dbReference type="PROSITE" id="PS51725">
    <property type="entry name" value="ABM"/>
    <property type="match status" value="1"/>
</dbReference>
<protein>
    <recommendedName>
        <fullName evidence="1">(4S)-4-hydroxy-5-phosphonooxypentane-2,3-dione isomerase</fullName>
        <ecNumber evidence="1">5.3.1.32</ecNumber>
    </recommendedName>
    <alternativeName>
        <fullName evidence="1">Autoinducer 2-degrading protein LsrG</fullName>
        <shortName evidence="1">AI-2-degrading protein LsrG</shortName>
    </alternativeName>
    <alternativeName>
        <fullName evidence="1">Phospho-(S)-4,5-dihydroxy-2,3-pentanedione isomerase</fullName>
    </alternativeName>
    <alternativeName>
        <fullName evidence="1">Phospho-AI-2 isomerase</fullName>
    </alternativeName>
</protein>
<accession>A4TQM0</accession>
<evidence type="ECO:0000255" key="1">
    <source>
        <dbReference type="HAMAP-Rule" id="MF_02051"/>
    </source>
</evidence>
<reference key="1">
    <citation type="submission" date="2007-02" db="EMBL/GenBank/DDBJ databases">
        <title>Complete sequence of chromosome of Yersinia pestis Pestoides F.</title>
        <authorList>
            <consortium name="US DOE Joint Genome Institute"/>
            <person name="Copeland A."/>
            <person name="Lucas S."/>
            <person name="Lapidus A."/>
            <person name="Barry K."/>
            <person name="Detter J.C."/>
            <person name="Glavina del Rio T."/>
            <person name="Hammon N."/>
            <person name="Israni S."/>
            <person name="Dalin E."/>
            <person name="Tice H."/>
            <person name="Pitluck S."/>
            <person name="Di Bartolo G."/>
            <person name="Chain P."/>
            <person name="Malfatti S."/>
            <person name="Shin M."/>
            <person name="Vergez L."/>
            <person name="Schmutz J."/>
            <person name="Larimer F."/>
            <person name="Land M."/>
            <person name="Hauser L."/>
            <person name="Worsham P."/>
            <person name="Chu M."/>
            <person name="Bearden S."/>
            <person name="Garcia E."/>
            <person name="Richardson P."/>
        </authorList>
    </citation>
    <scope>NUCLEOTIDE SEQUENCE [LARGE SCALE GENOMIC DNA]</scope>
    <source>
        <strain>Pestoides F</strain>
    </source>
</reference>
<proteinExistence type="inferred from homology"/>
<gene>
    <name evidence="1" type="primary">lsrG</name>
    <name type="ordered locus">YPDSF_3224</name>
</gene>
<organism>
    <name type="scientific">Yersinia pestis (strain Pestoides F)</name>
    <dbReference type="NCBI Taxonomy" id="386656"/>
    <lineage>
        <taxon>Bacteria</taxon>
        <taxon>Pseudomonadati</taxon>
        <taxon>Pseudomonadota</taxon>
        <taxon>Gammaproteobacteria</taxon>
        <taxon>Enterobacterales</taxon>
        <taxon>Yersiniaceae</taxon>
        <taxon>Yersinia</taxon>
    </lineage>
</organism>
<name>LSRG_YERPP</name>
<sequence>MHVTLVEINVKEDKVDQFIEVFRANHLGSIREAGNLRFDVLRDEHIPTRFYIYEAYTDEAAVAIHKTTPHYLQCVEQLAPLMTGPRKKTVFIGLMP</sequence>
<comment type="function">
    <text evidence="1">Involved in the degradation of phospho-AI-2, thereby terminating induction of the lsr operon and closing the AI-2 signaling cycle. Catalyzes the conversion of (4S)-4-hydroxy-5-phosphonooxypentane-2,3-dione (P-DPD) to 3-hydroxy-5-phosphonooxypentane-2,4-dione (P-HPD).</text>
</comment>
<comment type="catalytic activity">
    <reaction evidence="1">
        <text>(2S)-2-hydroxy-3,4-dioxopentyl phosphate = 3-hydroxy-2,4-dioxopentyl phosphate</text>
        <dbReference type="Rhea" id="RHEA:44360"/>
        <dbReference type="ChEBI" id="CHEBI:71677"/>
        <dbReference type="ChEBI" id="CHEBI:84359"/>
        <dbReference type="EC" id="5.3.1.32"/>
    </reaction>
</comment>
<comment type="subunit">
    <text evidence="1">Homodimer.</text>
</comment>
<comment type="subcellular location">
    <subcellularLocation>
        <location evidence="1">Cytoplasm</location>
    </subcellularLocation>
</comment>
<comment type="similarity">
    <text evidence="1">Belongs to the LsrG family.</text>
</comment>
<feature type="chain" id="PRO_0000351578" description="(4S)-4-hydroxy-5-phosphonooxypentane-2,3-dione isomerase">
    <location>
        <begin position="1"/>
        <end position="96"/>
    </location>
</feature>
<feature type="domain" description="ABM" evidence="1">
    <location>
        <begin position="2"/>
        <end position="91"/>
    </location>
</feature>